<comment type="function">
    <text evidence="1">Catalyzes the transfer of a phosphate group to glutamate to form L-glutamate 5-phosphate.</text>
</comment>
<comment type="catalytic activity">
    <reaction evidence="1">
        <text>L-glutamate + ATP = L-glutamyl 5-phosphate + ADP</text>
        <dbReference type="Rhea" id="RHEA:14877"/>
        <dbReference type="ChEBI" id="CHEBI:29985"/>
        <dbReference type="ChEBI" id="CHEBI:30616"/>
        <dbReference type="ChEBI" id="CHEBI:58274"/>
        <dbReference type="ChEBI" id="CHEBI:456216"/>
        <dbReference type="EC" id="2.7.2.11"/>
    </reaction>
</comment>
<comment type="pathway">
    <text evidence="1">Amino-acid biosynthesis; L-proline biosynthesis; L-glutamate 5-semialdehyde from L-glutamate: step 1/2.</text>
</comment>
<comment type="subcellular location">
    <subcellularLocation>
        <location evidence="1">Cytoplasm</location>
    </subcellularLocation>
</comment>
<comment type="similarity">
    <text evidence="1">Belongs to the glutamate 5-kinase family.</text>
</comment>
<evidence type="ECO:0000255" key="1">
    <source>
        <dbReference type="HAMAP-Rule" id="MF_00456"/>
    </source>
</evidence>
<proteinExistence type="inferred from homology"/>
<reference key="1">
    <citation type="journal article" date="2004" name="Nucleic Acids Res.">
        <title>Thermoadaptation trait revealed by the genome sequence of thermophilic Geobacillus kaustophilus.</title>
        <authorList>
            <person name="Takami H."/>
            <person name="Takaki Y."/>
            <person name="Chee G.-J."/>
            <person name="Nishi S."/>
            <person name="Shimamura S."/>
            <person name="Suzuki H."/>
            <person name="Matsui S."/>
            <person name="Uchiyama I."/>
        </authorList>
    </citation>
    <scope>NUCLEOTIDE SEQUENCE [LARGE SCALE GENOMIC DNA]</scope>
    <source>
        <strain>HTA426</strain>
    </source>
</reference>
<feature type="chain" id="PRO_0000109674" description="Glutamate 5-kinase">
    <location>
        <begin position="1"/>
        <end position="374"/>
    </location>
</feature>
<feature type="domain" description="PUA" evidence="1">
    <location>
        <begin position="276"/>
        <end position="354"/>
    </location>
</feature>
<feature type="binding site" evidence="1">
    <location>
        <position position="9"/>
    </location>
    <ligand>
        <name>ATP</name>
        <dbReference type="ChEBI" id="CHEBI:30616"/>
    </ligand>
</feature>
<feature type="binding site" evidence="1">
    <location>
        <position position="49"/>
    </location>
    <ligand>
        <name>substrate</name>
    </ligand>
</feature>
<feature type="binding site" evidence="1">
    <location>
        <position position="136"/>
    </location>
    <ligand>
        <name>substrate</name>
    </ligand>
</feature>
<feature type="binding site" evidence="1">
    <location>
        <position position="148"/>
    </location>
    <ligand>
        <name>substrate</name>
    </ligand>
</feature>
<feature type="binding site" evidence="1">
    <location>
        <begin position="168"/>
        <end position="169"/>
    </location>
    <ligand>
        <name>ATP</name>
        <dbReference type="ChEBI" id="CHEBI:30616"/>
    </ligand>
</feature>
<feature type="binding site" evidence="1">
    <location>
        <begin position="210"/>
        <end position="216"/>
    </location>
    <ligand>
        <name>ATP</name>
        <dbReference type="ChEBI" id="CHEBI:30616"/>
    </ligand>
</feature>
<protein>
    <recommendedName>
        <fullName evidence="1">Glutamate 5-kinase</fullName>
        <ecNumber evidence="1">2.7.2.11</ecNumber>
    </recommendedName>
    <alternativeName>
        <fullName evidence="1">Gamma-glutamyl kinase</fullName>
        <shortName evidence="1">GK</shortName>
    </alternativeName>
</protein>
<gene>
    <name evidence="1" type="primary">proB</name>
    <name type="ordered locus">GK2048</name>
</gene>
<organism>
    <name type="scientific">Geobacillus kaustophilus (strain HTA426)</name>
    <dbReference type="NCBI Taxonomy" id="235909"/>
    <lineage>
        <taxon>Bacteria</taxon>
        <taxon>Bacillati</taxon>
        <taxon>Bacillota</taxon>
        <taxon>Bacilli</taxon>
        <taxon>Bacillales</taxon>
        <taxon>Anoxybacillaceae</taxon>
        <taxon>Geobacillus</taxon>
        <taxon>Geobacillus thermoleovorans group</taxon>
    </lineage>
</organism>
<dbReference type="EC" id="2.7.2.11" evidence="1"/>
<dbReference type="EMBL" id="BA000043">
    <property type="protein sequence ID" value="BAD76333.1"/>
    <property type="molecule type" value="Genomic_DNA"/>
</dbReference>
<dbReference type="RefSeq" id="WP_011231534.1">
    <property type="nucleotide sequence ID" value="NC_006510.1"/>
</dbReference>
<dbReference type="SMR" id="Q5KYA3"/>
<dbReference type="STRING" id="235909.GK2048"/>
<dbReference type="GeneID" id="32063871"/>
<dbReference type="KEGG" id="gka:GK2048"/>
<dbReference type="eggNOG" id="COG0263">
    <property type="taxonomic scope" value="Bacteria"/>
</dbReference>
<dbReference type="HOGENOM" id="CLU_025400_2_0_9"/>
<dbReference type="UniPathway" id="UPA00098">
    <property type="reaction ID" value="UER00359"/>
</dbReference>
<dbReference type="Proteomes" id="UP000001172">
    <property type="component" value="Chromosome"/>
</dbReference>
<dbReference type="GO" id="GO:0005829">
    <property type="term" value="C:cytosol"/>
    <property type="evidence" value="ECO:0007669"/>
    <property type="project" value="TreeGrafter"/>
</dbReference>
<dbReference type="GO" id="GO:0005524">
    <property type="term" value="F:ATP binding"/>
    <property type="evidence" value="ECO:0007669"/>
    <property type="project" value="UniProtKB-KW"/>
</dbReference>
<dbReference type="GO" id="GO:0004349">
    <property type="term" value="F:glutamate 5-kinase activity"/>
    <property type="evidence" value="ECO:0007669"/>
    <property type="project" value="UniProtKB-UniRule"/>
</dbReference>
<dbReference type="GO" id="GO:0003723">
    <property type="term" value="F:RNA binding"/>
    <property type="evidence" value="ECO:0007669"/>
    <property type="project" value="InterPro"/>
</dbReference>
<dbReference type="GO" id="GO:0055129">
    <property type="term" value="P:L-proline biosynthetic process"/>
    <property type="evidence" value="ECO:0007669"/>
    <property type="project" value="UniProtKB-UniRule"/>
</dbReference>
<dbReference type="CDD" id="cd04242">
    <property type="entry name" value="AAK_G5K_ProB"/>
    <property type="match status" value="1"/>
</dbReference>
<dbReference type="CDD" id="cd21157">
    <property type="entry name" value="PUA_G5K"/>
    <property type="match status" value="1"/>
</dbReference>
<dbReference type="FunFam" id="2.30.130.10:FF:000007">
    <property type="entry name" value="Glutamate 5-kinase"/>
    <property type="match status" value="1"/>
</dbReference>
<dbReference type="FunFam" id="3.40.1160.10:FF:000018">
    <property type="entry name" value="Glutamate 5-kinase"/>
    <property type="match status" value="1"/>
</dbReference>
<dbReference type="Gene3D" id="3.40.1160.10">
    <property type="entry name" value="Acetylglutamate kinase-like"/>
    <property type="match status" value="1"/>
</dbReference>
<dbReference type="Gene3D" id="2.30.130.10">
    <property type="entry name" value="PUA domain"/>
    <property type="match status" value="1"/>
</dbReference>
<dbReference type="HAMAP" id="MF_00456">
    <property type="entry name" value="ProB"/>
    <property type="match status" value="1"/>
</dbReference>
<dbReference type="InterPro" id="IPR036393">
    <property type="entry name" value="AceGlu_kinase-like_sf"/>
</dbReference>
<dbReference type="InterPro" id="IPR001048">
    <property type="entry name" value="Asp/Glu/Uridylate_kinase"/>
</dbReference>
<dbReference type="InterPro" id="IPR041739">
    <property type="entry name" value="G5K_ProB"/>
</dbReference>
<dbReference type="InterPro" id="IPR001057">
    <property type="entry name" value="Glu/AcGlu_kinase"/>
</dbReference>
<dbReference type="InterPro" id="IPR011529">
    <property type="entry name" value="Glu_5kinase"/>
</dbReference>
<dbReference type="InterPro" id="IPR005715">
    <property type="entry name" value="Glu_5kinase/COase_Synthase"/>
</dbReference>
<dbReference type="InterPro" id="IPR019797">
    <property type="entry name" value="Glutamate_5-kinase_CS"/>
</dbReference>
<dbReference type="InterPro" id="IPR002478">
    <property type="entry name" value="PUA"/>
</dbReference>
<dbReference type="InterPro" id="IPR015947">
    <property type="entry name" value="PUA-like_sf"/>
</dbReference>
<dbReference type="InterPro" id="IPR036974">
    <property type="entry name" value="PUA_sf"/>
</dbReference>
<dbReference type="NCBIfam" id="TIGR01027">
    <property type="entry name" value="proB"/>
    <property type="match status" value="1"/>
</dbReference>
<dbReference type="PANTHER" id="PTHR43654">
    <property type="entry name" value="GLUTAMATE 5-KINASE"/>
    <property type="match status" value="1"/>
</dbReference>
<dbReference type="PANTHER" id="PTHR43654:SF1">
    <property type="entry name" value="ISOPENTENYL PHOSPHATE KINASE"/>
    <property type="match status" value="1"/>
</dbReference>
<dbReference type="Pfam" id="PF00696">
    <property type="entry name" value="AA_kinase"/>
    <property type="match status" value="1"/>
</dbReference>
<dbReference type="Pfam" id="PF01472">
    <property type="entry name" value="PUA"/>
    <property type="match status" value="1"/>
</dbReference>
<dbReference type="PIRSF" id="PIRSF000729">
    <property type="entry name" value="GK"/>
    <property type="match status" value="1"/>
</dbReference>
<dbReference type="PRINTS" id="PR00474">
    <property type="entry name" value="GLU5KINASE"/>
</dbReference>
<dbReference type="SMART" id="SM00359">
    <property type="entry name" value="PUA"/>
    <property type="match status" value="1"/>
</dbReference>
<dbReference type="SUPFAM" id="SSF53633">
    <property type="entry name" value="Carbamate kinase-like"/>
    <property type="match status" value="1"/>
</dbReference>
<dbReference type="SUPFAM" id="SSF88697">
    <property type="entry name" value="PUA domain-like"/>
    <property type="match status" value="1"/>
</dbReference>
<dbReference type="PROSITE" id="PS00902">
    <property type="entry name" value="GLUTAMATE_5_KINASE"/>
    <property type="match status" value="1"/>
</dbReference>
<dbReference type="PROSITE" id="PS50890">
    <property type="entry name" value="PUA"/>
    <property type="match status" value="1"/>
</dbReference>
<accession>Q5KYA3</accession>
<name>PROB_GEOKA</name>
<keyword id="KW-0028">Amino-acid biosynthesis</keyword>
<keyword id="KW-0067">ATP-binding</keyword>
<keyword id="KW-0963">Cytoplasm</keyword>
<keyword id="KW-0418">Kinase</keyword>
<keyword id="KW-0547">Nucleotide-binding</keyword>
<keyword id="KW-0641">Proline biosynthesis</keyword>
<keyword id="KW-1185">Reference proteome</keyword>
<keyword id="KW-0808">Transferase</keyword>
<sequence>MKRQRVVVKIGSSSLTDPKGGLCHDKLFDHVEAIAYLKQLGHDVILITSGAVAAGFGPLGYPARPTTIAGKQAAAAVGQSLLMQAYSSAFAQFGFTAAQLLLTRSDFYSRERFRNLFATITTLLENGAVPIINENDSVSIEELTFGDNDMLSALVAGFLHADALILLTDINGLYDANPKTNPQAKKYAFLPEITDEMIEAAGGIGSAVGTGGMRSKLLAARKALSFGVSVFIGTGSGREKLADILAGKGDGTYIGVPFPKQMQMRKQWIAYHAPVAGMITVDSGAEEALLMRGKSLLPAGVTAVSGDFHAMDVVDVVNEKGITIGRGQVYYAAADLKKVKGRPSEEARQYSYLHRPEVIHRDNWVTLRKESVSK</sequence>